<protein>
    <recommendedName>
        <fullName>Ferric aerobactin receptor</fullName>
    </recommendedName>
    <alternativeName>
        <fullName>Cloacin receptor</fullName>
    </alternativeName>
</protein>
<geneLocation type="plasmid">
    <name>IncFI ColV3-K30</name>
</geneLocation>
<organism>
    <name type="scientific">Escherichia coli</name>
    <dbReference type="NCBI Taxonomy" id="562"/>
    <lineage>
        <taxon>Bacteria</taxon>
        <taxon>Pseudomonadati</taxon>
        <taxon>Pseudomonadota</taxon>
        <taxon>Gammaproteobacteria</taxon>
        <taxon>Enterobacterales</taxon>
        <taxon>Enterobacteriaceae</taxon>
        <taxon>Escherichia</taxon>
    </lineage>
</organism>
<keyword id="KW-0998">Cell outer membrane</keyword>
<keyword id="KW-0406">Ion transport</keyword>
<keyword id="KW-0408">Iron</keyword>
<keyword id="KW-0410">Iron transport</keyword>
<keyword id="KW-0472">Membrane</keyword>
<keyword id="KW-0614">Plasmid</keyword>
<keyword id="KW-0675">Receptor</keyword>
<keyword id="KW-0732">Signal</keyword>
<keyword id="KW-0798">TonB box</keyword>
<keyword id="KW-0812">Transmembrane</keyword>
<keyword id="KW-1134">Transmembrane beta strand</keyword>
<keyword id="KW-0813">Transport</keyword>
<evidence type="ECO:0000255" key="1">
    <source>
        <dbReference type="PROSITE-ProRule" id="PRU01360"/>
    </source>
</evidence>
<evidence type="ECO:0000269" key="2">
    <source>
    </source>
</evidence>
<evidence type="ECO:0000305" key="3"/>
<name>IUTA_ECOLX</name>
<proteinExistence type="evidence at protein level"/>
<reference key="1">
    <citation type="journal article" date="1985" name="FEMS Microbiol. Lett.">
        <title>Characterization of the pColV-K30 encoded cloacin DF13/aerobactin outer membrane receptor protein of Escherichia coli; isolation and purification of the protein and analysis of its nucleotide sequence and primary structure.</title>
        <authorList>
            <person name="Krone W.J.A."/>
            <person name="Stegehuis F."/>
            <person name="Koningstein G."/>
            <person name="van Doorn C."/>
            <person name="Roosendaal B."/>
            <person name="de Graaf F.K."/>
            <person name="Oudega B."/>
        </authorList>
    </citation>
    <scope>NUCLEOTIDE SEQUENCE [GENOMIC DNA]</scope>
    <source>
        <strain>F344</strain>
    </source>
</reference>
<reference key="2">
    <citation type="journal article" date="1982" name="J. Bacteriol.">
        <title>The cloacin receptor of ColV-bearing Escherichia coli is part of the Fe3+-aerobactin transport system.</title>
        <authorList>
            <person name="Bindereif A."/>
            <person name="Braun V."/>
            <person name="Hantke K."/>
        </authorList>
    </citation>
    <scope>FUNCTION AS AN AEROBACTIN RECEPTOR</scope>
    <scope>IDENTIFICATION</scope>
    <scope>INDUCTION</scope>
    <scope>SUBCELLULAR LOCATION</scope>
</reference>
<feature type="signal peptide">
    <location>
        <begin position="1"/>
        <end position="25"/>
    </location>
</feature>
<feature type="chain" id="PRO_0000034767" description="Ferric aerobactin receptor">
    <location>
        <begin position="26"/>
        <end position="732"/>
    </location>
</feature>
<feature type="domain" description="TBDR plug" evidence="1">
    <location>
        <begin position="43"/>
        <end position="153"/>
    </location>
</feature>
<feature type="domain" description="TBDR beta-barrel" evidence="1">
    <location>
        <begin position="158"/>
        <end position="732"/>
    </location>
</feature>
<feature type="short sequence motif" description="TonB box">
    <location>
        <begin position="31"/>
        <end position="38"/>
    </location>
</feature>
<feature type="short sequence motif" description="TonB C-terminal box">
    <location>
        <begin position="715"/>
        <end position="732"/>
    </location>
</feature>
<sequence length="732" mass="81014">MMISKKYTLWALNPLLLTMMAPAVAQQTDDETFVVSANRSNRTVAEMAQTTWVIENAELEQQIQGGKELKDALAQLIPGLDVSSRSRTNYGMNVRGRPLVVLVDGVRLNSSRTDSRQLDSIDPFNMHHIEVIFGATSLYGGGSTGGLINIVTKKGQPETMMEFEAGTKSGFSSSKDHDERIAGAVSGGNEHISGRLSVAYQKFGGWFDGNGDATLLDNTQTGLQYSDRLDIMGTGTLNIDESRQLQLITQYYKSQGDDDYGLNLGKGFSAIRGTSTPFVSNGLNSDRIPGTDGHLISLQYSDSAFLGQELVGQVYYRDESLRFYPFPTVNANKQVTAFSSSQQDTDQYGMKLTLNSKPMDGWQITWGLDADHERFTSNQMFFDLAQASASGGLNNKKIYTTGRYPSYDITNLAAFLQSGYDINNLFTLNGGVRYQYTENKIDDFIGYAQQRQIGAGKATSADAFWRLSRLRHFLFNAGLLMHITEPQQAWLNFSQGLELPDPGKYYGRGIYGAAVNGHLPLTKSVNVSDSKLEGVKVDSYELGWRFTGNNLRTQIAAYYSISDKSVVANKDLTISVVDDKRRIYGVEGAVDYLIPDTDWSTGVNFNVLKTESKVNGTWQKYDVKTASPSKATAYIGWAPDPWSLRVQSTTSFDVSDAQGYKVDGYTTVDLLGSYQLPVGTLSFSIENLFDRDYTTVWGQRAPLYYSPGYGPASLYDYKGRGRTFGLNYSVLF</sequence>
<comment type="function">
    <text evidence="2">Receptor for cloacin DF13/aerobactin.</text>
</comment>
<comment type="subcellular location">
    <subcellularLocation>
        <location evidence="1 2">Cell outer membrane</location>
        <topology evidence="1">Multi-pass membrane protein</topology>
    </subcellularLocation>
</comment>
<comment type="induction">
    <text evidence="2">Under iron starvation.</text>
</comment>
<comment type="similarity">
    <text evidence="3">Belongs to the TonB-dependent receptor family.</text>
</comment>
<comment type="sequence caution" evidence="3">
    <conflict type="erroneous initiation">
        <sequence resource="EMBL-CDS" id="CAA29298"/>
    </conflict>
    <text>Truncated N-terminus.</text>
</comment>
<accession>P14542</accession>
<gene>
    <name type="primary">iutA</name>
</gene>
<dbReference type="EMBL" id="X05874">
    <property type="protein sequence ID" value="CAA29297.1"/>
    <property type="molecule type" value="Genomic_DNA"/>
</dbReference>
<dbReference type="EMBL" id="X05874">
    <property type="protein sequence ID" value="CAA29298.1"/>
    <property type="status" value="ALT_INIT"/>
    <property type="molecule type" value="Genomic_DNA"/>
</dbReference>
<dbReference type="PIR" id="S01042">
    <property type="entry name" value="S01042"/>
</dbReference>
<dbReference type="SMR" id="P14542"/>
<dbReference type="GO" id="GO:0009279">
    <property type="term" value="C:cell outer membrane"/>
    <property type="evidence" value="ECO:0007669"/>
    <property type="project" value="UniProtKB-SubCell"/>
</dbReference>
<dbReference type="GO" id="GO:0015344">
    <property type="term" value="F:siderophore uptake transmembrane transporter activity"/>
    <property type="evidence" value="ECO:0000314"/>
    <property type="project" value="GO_Central"/>
</dbReference>
<dbReference type="GO" id="GO:0038023">
    <property type="term" value="F:signaling receptor activity"/>
    <property type="evidence" value="ECO:0007669"/>
    <property type="project" value="InterPro"/>
</dbReference>
<dbReference type="GO" id="GO:0019271">
    <property type="term" value="P:aerobactin transport"/>
    <property type="evidence" value="ECO:0000315"/>
    <property type="project" value="UniProtKB"/>
</dbReference>
<dbReference type="CDD" id="cd01347">
    <property type="entry name" value="ligand_gated_channel"/>
    <property type="match status" value="1"/>
</dbReference>
<dbReference type="FunFam" id="2.40.170.20:FF:000007">
    <property type="entry name" value="Ferric aerobactin receptor"/>
    <property type="match status" value="1"/>
</dbReference>
<dbReference type="FunFam" id="2.170.130.10:FF:000011">
    <property type="entry name" value="TonB-dependent siderophore receptor"/>
    <property type="match status" value="1"/>
</dbReference>
<dbReference type="Gene3D" id="2.40.170.20">
    <property type="entry name" value="TonB-dependent receptor, beta-barrel domain"/>
    <property type="match status" value="1"/>
</dbReference>
<dbReference type="Gene3D" id="2.170.130.10">
    <property type="entry name" value="TonB-dependent receptor, plug domain"/>
    <property type="match status" value="1"/>
</dbReference>
<dbReference type="InterPro" id="IPR012910">
    <property type="entry name" value="Plug_dom"/>
</dbReference>
<dbReference type="InterPro" id="IPR037066">
    <property type="entry name" value="Plug_dom_sf"/>
</dbReference>
<dbReference type="InterPro" id="IPR039426">
    <property type="entry name" value="TonB-dep_rcpt-like"/>
</dbReference>
<dbReference type="InterPro" id="IPR000531">
    <property type="entry name" value="TonB-dep_rcpt_b-brl"/>
</dbReference>
<dbReference type="InterPro" id="IPR010916">
    <property type="entry name" value="TonB_box_CS"/>
</dbReference>
<dbReference type="InterPro" id="IPR036942">
    <property type="entry name" value="TonB_rcpt_b-brl_sf"/>
</dbReference>
<dbReference type="InterPro" id="IPR010917">
    <property type="entry name" value="TonB_rcpt_CS"/>
</dbReference>
<dbReference type="InterPro" id="IPR010105">
    <property type="entry name" value="TonB_sidphr_rcpt"/>
</dbReference>
<dbReference type="NCBIfam" id="TIGR01783">
    <property type="entry name" value="TonB-siderophor"/>
    <property type="match status" value="1"/>
</dbReference>
<dbReference type="PANTHER" id="PTHR30069:SF42">
    <property type="entry name" value="FERRIC AEROBACTIN RECEPTOR"/>
    <property type="match status" value="1"/>
</dbReference>
<dbReference type="PANTHER" id="PTHR30069">
    <property type="entry name" value="TONB-DEPENDENT OUTER MEMBRANE RECEPTOR"/>
    <property type="match status" value="1"/>
</dbReference>
<dbReference type="Pfam" id="PF07715">
    <property type="entry name" value="Plug"/>
    <property type="match status" value="1"/>
</dbReference>
<dbReference type="Pfam" id="PF00593">
    <property type="entry name" value="TonB_dep_Rec_b-barrel"/>
    <property type="match status" value="1"/>
</dbReference>
<dbReference type="SUPFAM" id="SSF56935">
    <property type="entry name" value="Porins"/>
    <property type="match status" value="1"/>
</dbReference>
<dbReference type="PROSITE" id="PS00430">
    <property type="entry name" value="TONB_DEPENDENT_REC_1"/>
    <property type="match status" value="1"/>
</dbReference>
<dbReference type="PROSITE" id="PS01156">
    <property type="entry name" value="TONB_DEPENDENT_REC_2"/>
    <property type="match status" value="1"/>
</dbReference>
<dbReference type="PROSITE" id="PS52016">
    <property type="entry name" value="TONB_DEPENDENT_REC_3"/>
    <property type="match status" value="1"/>
</dbReference>